<protein>
    <recommendedName>
        <fullName evidence="1">Orotate phosphoribosyltransferase</fullName>
        <shortName evidence="1">OPRT</shortName>
        <shortName evidence="1">OPRTase</shortName>
        <ecNumber evidence="1">2.4.2.10</ecNumber>
    </recommendedName>
</protein>
<keyword id="KW-0328">Glycosyltransferase</keyword>
<keyword id="KW-0460">Magnesium</keyword>
<keyword id="KW-0665">Pyrimidine biosynthesis</keyword>
<keyword id="KW-1185">Reference proteome</keyword>
<keyword id="KW-0808">Transferase</keyword>
<dbReference type="EC" id="2.4.2.10" evidence="1"/>
<dbReference type="EMBL" id="AE009439">
    <property type="protein sequence ID" value="AAM02285.1"/>
    <property type="molecule type" value="Genomic_DNA"/>
</dbReference>
<dbReference type="SMR" id="P58860"/>
<dbReference type="FunCoup" id="P58860">
    <property type="interactions" value="120"/>
</dbReference>
<dbReference type="STRING" id="190192.MK1072"/>
<dbReference type="PaxDb" id="190192-MK1072"/>
<dbReference type="EnsemblBacteria" id="AAM02285">
    <property type="protein sequence ID" value="AAM02285"/>
    <property type="gene ID" value="MK1072"/>
</dbReference>
<dbReference type="KEGG" id="mka:MK1072"/>
<dbReference type="PATRIC" id="fig|190192.8.peg.1126"/>
<dbReference type="HOGENOM" id="CLU_074878_2_0_2"/>
<dbReference type="InParanoid" id="P58860"/>
<dbReference type="OrthoDB" id="9089at2157"/>
<dbReference type="UniPathway" id="UPA00070">
    <property type="reaction ID" value="UER00119"/>
</dbReference>
<dbReference type="Proteomes" id="UP000001826">
    <property type="component" value="Chromosome"/>
</dbReference>
<dbReference type="GO" id="GO:0000287">
    <property type="term" value="F:magnesium ion binding"/>
    <property type="evidence" value="ECO:0007669"/>
    <property type="project" value="UniProtKB-UniRule"/>
</dbReference>
<dbReference type="GO" id="GO:0004588">
    <property type="term" value="F:orotate phosphoribosyltransferase activity"/>
    <property type="evidence" value="ECO:0007669"/>
    <property type="project" value="UniProtKB-UniRule"/>
</dbReference>
<dbReference type="GO" id="GO:0044205">
    <property type="term" value="P:'de novo' UMP biosynthetic process"/>
    <property type="evidence" value="ECO:0007669"/>
    <property type="project" value="UniProtKB-UniRule"/>
</dbReference>
<dbReference type="GO" id="GO:0019856">
    <property type="term" value="P:pyrimidine nucleobase biosynthetic process"/>
    <property type="evidence" value="ECO:0007669"/>
    <property type="project" value="TreeGrafter"/>
</dbReference>
<dbReference type="CDD" id="cd06223">
    <property type="entry name" value="PRTases_typeI"/>
    <property type="match status" value="1"/>
</dbReference>
<dbReference type="Gene3D" id="3.40.50.2020">
    <property type="match status" value="1"/>
</dbReference>
<dbReference type="HAMAP" id="MF_01208">
    <property type="entry name" value="PyrE"/>
    <property type="match status" value="1"/>
</dbReference>
<dbReference type="InterPro" id="IPR023031">
    <property type="entry name" value="OPRT"/>
</dbReference>
<dbReference type="InterPro" id="IPR004467">
    <property type="entry name" value="Or_phspho_trans_dom"/>
</dbReference>
<dbReference type="InterPro" id="IPR000836">
    <property type="entry name" value="PRibTrfase_dom"/>
</dbReference>
<dbReference type="InterPro" id="IPR029057">
    <property type="entry name" value="PRTase-like"/>
</dbReference>
<dbReference type="NCBIfam" id="TIGR00336">
    <property type="entry name" value="pyrE"/>
    <property type="match status" value="1"/>
</dbReference>
<dbReference type="PANTHER" id="PTHR19278">
    <property type="entry name" value="OROTATE PHOSPHORIBOSYLTRANSFERASE"/>
    <property type="match status" value="1"/>
</dbReference>
<dbReference type="PANTHER" id="PTHR19278:SF9">
    <property type="entry name" value="URIDINE 5'-MONOPHOSPHATE SYNTHASE"/>
    <property type="match status" value="1"/>
</dbReference>
<dbReference type="Pfam" id="PF00156">
    <property type="entry name" value="Pribosyltran"/>
    <property type="match status" value="1"/>
</dbReference>
<dbReference type="SUPFAM" id="SSF53271">
    <property type="entry name" value="PRTase-like"/>
    <property type="match status" value="1"/>
</dbReference>
<reference key="1">
    <citation type="journal article" date="2002" name="Proc. Natl. Acad. Sci. U.S.A.">
        <title>The complete genome of hyperthermophile Methanopyrus kandleri AV19 and monophyly of archaeal methanogens.</title>
        <authorList>
            <person name="Slesarev A.I."/>
            <person name="Mezhevaya K.V."/>
            <person name="Makarova K.S."/>
            <person name="Polushin N.N."/>
            <person name="Shcherbinina O.V."/>
            <person name="Shakhova V.V."/>
            <person name="Belova G.I."/>
            <person name="Aravind L."/>
            <person name="Natale D.A."/>
            <person name="Rogozin I.B."/>
            <person name="Tatusov R.L."/>
            <person name="Wolf Y.I."/>
            <person name="Stetter K.O."/>
            <person name="Malykh A.G."/>
            <person name="Koonin E.V."/>
            <person name="Kozyavkin S.A."/>
        </authorList>
    </citation>
    <scope>NUCLEOTIDE SEQUENCE [LARGE SCALE GENOMIC DNA]</scope>
    <source>
        <strain>AV19 / DSM 6324 / JCM 9639 / NBRC 100938</strain>
    </source>
</reference>
<proteinExistence type="inferred from homology"/>
<feature type="chain" id="PRO_0000110780" description="Orotate phosphoribosyltransferase">
    <location>
        <begin position="1"/>
        <end position="183"/>
    </location>
</feature>
<feature type="binding site" evidence="1">
    <location>
        <position position="90"/>
    </location>
    <ligand>
        <name>5-phospho-alpha-D-ribose 1-diphosphate</name>
        <dbReference type="ChEBI" id="CHEBI:58017"/>
        <note>ligand shared between dimeric partners</note>
    </ligand>
</feature>
<feature type="binding site" description="in other chain" evidence="1">
    <location>
        <position position="91"/>
    </location>
    <ligand>
        <name>5-phospho-alpha-D-ribose 1-diphosphate</name>
        <dbReference type="ChEBI" id="CHEBI:58017"/>
        <note>ligand shared between dimeric partners</note>
    </ligand>
</feature>
<feature type="binding site" evidence="1">
    <location>
        <position position="94"/>
    </location>
    <ligand>
        <name>5-phospho-alpha-D-ribose 1-diphosphate</name>
        <dbReference type="ChEBI" id="CHEBI:58017"/>
        <note>ligand shared between dimeric partners</note>
    </ligand>
</feature>
<feature type="binding site" description="in other chain" evidence="1">
    <location>
        <begin position="115"/>
        <end position="123"/>
    </location>
    <ligand>
        <name>5-phospho-alpha-D-ribose 1-diphosphate</name>
        <dbReference type="ChEBI" id="CHEBI:58017"/>
        <note>ligand shared between dimeric partners</note>
    </ligand>
</feature>
<feature type="binding site" evidence="1">
    <location>
        <position position="119"/>
    </location>
    <ligand>
        <name>orotate</name>
        <dbReference type="ChEBI" id="CHEBI:30839"/>
    </ligand>
</feature>
<feature type="binding site" evidence="1">
    <location>
        <position position="147"/>
    </location>
    <ligand>
        <name>orotate</name>
        <dbReference type="ChEBI" id="CHEBI:30839"/>
    </ligand>
</feature>
<evidence type="ECO:0000255" key="1">
    <source>
        <dbReference type="HAMAP-Rule" id="MF_01208"/>
    </source>
</evidence>
<comment type="function">
    <text evidence="1">Catalyzes the transfer of a ribosyl phosphate group from 5-phosphoribose 1-diphosphate to orotate, leading to the formation of orotidine monophosphate (OMP).</text>
</comment>
<comment type="catalytic activity">
    <reaction evidence="1">
        <text>orotidine 5'-phosphate + diphosphate = orotate + 5-phospho-alpha-D-ribose 1-diphosphate</text>
        <dbReference type="Rhea" id="RHEA:10380"/>
        <dbReference type="ChEBI" id="CHEBI:30839"/>
        <dbReference type="ChEBI" id="CHEBI:33019"/>
        <dbReference type="ChEBI" id="CHEBI:57538"/>
        <dbReference type="ChEBI" id="CHEBI:58017"/>
        <dbReference type="EC" id="2.4.2.10"/>
    </reaction>
</comment>
<comment type="cofactor">
    <cofactor evidence="1">
        <name>Mg(2+)</name>
        <dbReference type="ChEBI" id="CHEBI:18420"/>
    </cofactor>
</comment>
<comment type="pathway">
    <text evidence="1">Pyrimidine metabolism; UMP biosynthesis via de novo pathway; UMP from orotate: step 1/2.</text>
</comment>
<comment type="subunit">
    <text evidence="1">Homodimer.</text>
</comment>
<comment type="similarity">
    <text evidence="1">Belongs to the purine/pyrimidine phosphoribosyltransferase family. PyrE subfamily.</text>
</comment>
<accession>P58860</accession>
<sequence length="183" mass="19600">MVMNRERLAEMLLEVGALKFGDFVLSSGKRSDYYVDIKEACTHPKVLDALTDALLEVLPDGDVLAGPELGAVPLVSVLSVKAGLPMAIVRKRKKEYGTGERIVGDVRGRKVVLVDDVATTGGSLLEALEAIEEEGGEVRDAVVVVDRQEGAEEALKERGVRLSSVLTADDLRGLRDAESTARG</sequence>
<gene>
    <name evidence="1" type="primary">pyrE</name>
    <name type="ordered locus">MK1072</name>
</gene>
<organism>
    <name type="scientific">Methanopyrus kandleri (strain AV19 / DSM 6324 / JCM 9639 / NBRC 100938)</name>
    <dbReference type="NCBI Taxonomy" id="190192"/>
    <lineage>
        <taxon>Archaea</taxon>
        <taxon>Methanobacteriati</taxon>
        <taxon>Methanobacteriota</taxon>
        <taxon>Methanomada group</taxon>
        <taxon>Methanopyri</taxon>
        <taxon>Methanopyrales</taxon>
        <taxon>Methanopyraceae</taxon>
        <taxon>Methanopyrus</taxon>
    </lineage>
</organism>
<name>PYRE_METKA</name>